<proteinExistence type="uncertain"/>
<feature type="chain" id="PRO_0000326109" description="Putative protein RNF216-like">
    <location>
        <begin position="1"/>
        <end position="42"/>
    </location>
</feature>
<gene>
    <name type="primary">RNF216P1</name>
    <name type="synonym">RNF216L</name>
</gene>
<evidence type="ECO:0000305" key="1"/>
<reference key="1">
    <citation type="journal article" date="2004" name="Nat. Genet.">
        <title>Complete sequencing and characterization of 21,243 full-length human cDNAs.</title>
        <authorList>
            <person name="Ota T."/>
            <person name="Suzuki Y."/>
            <person name="Nishikawa T."/>
            <person name="Otsuki T."/>
            <person name="Sugiyama T."/>
            <person name="Irie R."/>
            <person name="Wakamatsu A."/>
            <person name="Hayashi K."/>
            <person name="Sato H."/>
            <person name="Nagai K."/>
            <person name="Kimura K."/>
            <person name="Makita H."/>
            <person name="Sekine M."/>
            <person name="Obayashi M."/>
            <person name="Nishi T."/>
            <person name="Shibahara T."/>
            <person name="Tanaka T."/>
            <person name="Ishii S."/>
            <person name="Yamamoto J."/>
            <person name="Saito K."/>
            <person name="Kawai Y."/>
            <person name="Isono Y."/>
            <person name="Nakamura Y."/>
            <person name="Nagahari K."/>
            <person name="Murakami K."/>
            <person name="Yasuda T."/>
            <person name="Iwayanagi T."/>
            <person name="Wagatsuma M."/>
            <person name="Shiratori A."/>
            <person name="Sudo H."/>
            <person name="Hosoiri T."/>
            <person name="Kaku Y."/>
            <person name="Kodaira H."/>
            <person name="Kondo H."/>
            <person name="Sugawara M."/>
            <person name="Takahashi M."/>
            <person name="Kanda K."/>
            <person name="Yokoi T."/>
            <person name="Furuya T."/>
            <person name="Kikkawa E."/>
            <person name="Omura Y."/>
            <person name="Abe K."/>
            <person name="Kamihara K."/>
            <person name="Katsuta N."/>
            <person name="Sato K."/>
            <person name="Tanikawa M."/>
            <person name="Yamazaki M."/>
            <person name="Ninomiya K."/>
            <person name="Ishibashi T."/>
            <person name="Yamashita H."/>
            <person name="Murakawa K."/>
            <person name="Fujimori K."/>
            <person name="Tanai H."/>
            <person name="Kimata M."/>
            <person name="Watanabe M."/>
            <person name="Hiraoka S."/>
            <person name="Chiba Y."/>
            <person name="Ishida S."/>
            <person name="Ono Y."/>
            <person name="Takiguchi S."/>
            <person name="Watanabe S."/>
            <person name="Yosida M."/>
            <person name="Hotuta T."/>
            <person name="Kusano J."/>
            <person name="Kanehori K."/>
            <person name="Takahashi-Fujii A."/>
            <person name="Hara H."/>
            <person name="Tanase T.-O."/>
            <person name="Nomura Y."/>
            <person name="Togiya S."/>
            <person name="Komai F."/>
            <person name="Hara R."/>
            <person name="Takeuchi K."/>
            <person name="Arita M."/>
            <person name="Imose N."/>
            <person name="Musashino K."/>
            <person name="Yuuki H."/>
            <person name="Oshima A."/>
            <person name="Sasaki N."/>
            <person name="Aotsuka S."/>
            <person name="Yoshikawa Y."/>
            <person name="Matsunawa H."/>
            <person name="Ichihara T."/>
            <person name="Shiohata N."/>
            <person name="Sano S."/>
            <person name="Moriya S."/>
            <person name="Momiyama H."/>
            <person name="Satoh N."/>
            <person name="Takami S."/>
            <person name="Terashima Y."/>
            <person name="Suzuki O."/>
            <person name="Nakagawa S."/>
            <person name="Senoh A."/>
            <person name="Mizoguchi H."/>
            <person name="Goto Y."/>
            <person name="Shimizu F."/>
            <person name="Wakebe H."/>
            <person name="Hishigaki H."/>
            <person name="Watanabe T."/>
            <person name="Sugiyama A."/>
            <person name="Takemoto M."/>
            <person name="Kawakami B."/>
            <person name="Yamazaki M."/>
            <person name="Watanabe K."/>
            <person name="Kumagai A."/>
            <person name="Itakura S."/>
            <person name="Fukuzumi Y."/>
            <person name="Fujimori Y."/>
            <person name="Komiyama M."/>
            <person name="Tashiro H."/>
            <person name="Tanigami A."/>
            <person name="Fujiwara T."/>
            <person name="Ono T."/>
            <person name="Yamada K."/>
            <person name="Fujii Y."/>
            <person name="Ozaki K."/>
            <person name="Hirao M."/>
            <person name="Ohmori Y."/>
            <person name="Kawabata A."/>
            <person name="Hikiji T."/>
            <person name="Kobatake N."/>
            <person name="Inagaki H."/>
            <person name="Ikema Y."/>
            <person name="Okamoto S."/>
            <person name="Okitani R."/>
            <person name="Kawakami T."/>
            <person name="Noguchi S."/>
            <person name="Itoh T."/>
            <person name="Shigeta K."/>
            <person name="Senba T."/>
            <person name="Matsumura K."/>
            <person name="Nakajima Y."/>
            <person name="Mizuno T."/>
            <person name="Morinaga M."/>
            <person name="Sasaki M."/>
            <person name="Togashi T."/>
            <person name="Oyama M."/>
            <person name="Hata H."/>
            <person name="Watanabe M."/>
            <person name="Komatsu T."/>
            <person name="Mizushima-Sugano J."/>
            <person name="Satoh T."/>
            <person name="Shirai Y."/>
            <person name="Takahashi Y."/>
            <person name="Nakagawa K."/>
            <person name="Okumura K."/>
            <person name="Nagase T."/>
            <person name="Nomura N."/>
            <person name="Kikuchi H."/>
            <person name="Masuho Y."/>
            <person name="Yamashita R."/>
            <person name="Nakai K."/>
            <person name="Yada T."/>
            <person name="Nakamura Y."/>
            <person name="Ohara O."/>
            <person name="Isogai T."/>
            <person name="Sugano S."/>
        </authorList>
    </citation>
    <scope>NUCLEOTIDE SEQUENCE [LARGE SCALE MRNA]</scope>
    <source>
        <tissue>Lung</tissue>
    </source>
</reference>
<reference key="2">
    <citation type="journal article" date="2003" name="Nature">
        <title>The DNA sequence of human chromosome 7.</title>
        <authorList>
            <person name="Hillier L.W."/>
            <person name="Fulton R.S."/>
            <person name="Fulton L.A."/>
            <person name="Graves T.A."/>
            <person name="Pepin K.H."/>
            <person name="Wagner-McPherson C."/>
            <person name="Layman D."/>
            <person name="Maas J."/>
            <person name="Jaeger S."/>
            <person name="Walker R."/>
            <person name="Wylie K."/>
            <person name="Sekhon M."/>
            <person name="Becker M.C."/>
            <person name="O'Laughlin M.D."/>
            <person name="Schaller M.E."/>
            <person name="Fewell G.A."/>
            <person name="Delehaunty K.D."/>
            <person name="Miner T.L."/>
            <person name="Nash W.E."/>
            <person name="Cordes M."/>
            <person name="Du H."/>
            <person name="Sun H."/>
            <person name="Edwards J."/>
            <person name="Bradshaw-Cordum H."/>
            <person name="Ali J."/>
            <person name="Andrews S."/>
            <person name="Isak A."/>
            <person name="Vanbrunt A."/>
            <person name="Nguyen C."/>
            <person name="Du F."/>
            <person name="Lamar B."/>
            <person name="Courtney L."/>
            <person name="Kalicki J."/>
            <person name="Ozersky P."/>
            <person name="Bielicki L."/>
            <person name="Scott K."/>
            <person name="Holmes A."/>
            <person name="Harkins R."/>
            <person name="Harris A."/>
            <person name="Strong C.M."/>
            <person name="Hou S."/>
            <person name="Tomlinson C."/>
            <person name="Dauphin-Kohlberg S."/>
            <person name="Kozlowicz-Reilly A."/>
            <person name="Leonard S."/>
            <person name="Rohlfing T."/>
            <person name="Rock S.M."/>
            <person name="Tin-Wollam A.-M."/>
            <person name="Abbott A."/>
            <person name="Minx P."/>
            <person name="Maupin R."/>
            <person name="Strowmatt C."/>
            <person name="Latreille P."/>
            <person name="Miller N."/>
            <person name="Johnson D."/>
            <person name="Murray J."/>
            <person name="Woessner J.P."/>
            <person name="Wendl M.C."/>
            <person name="Yang S.-P."/>
            <person name="Schultz B.R."/>
            <person name="Wallis J.W."/>
            <person name="Spieth J."/>
            <person name="Bieri T.A."/>
            <person name="Nelson J.O."/>
            <person name="Berkowicz N."/>
            <person name="Wohldmann P.E."/>
            <person name="Cook L.L."/>
            <person name="Hickenbotham M.T."/>
            <person name="Eldred J."/>
            <person name="Williams D."/>
            <person name="Bedell J.A."/>
            <person name="Mardis E.R."/>
            <person name="Clifton S.W."/>
            <person name="Chissoe S.L."/>
            <person name="Marra M.A."/>
            <person name="Raymond C."/>
            <person name="Haugen E."/>
            <person name="Gillett W."/>
            <person name="Zhou Y."/>
            <person name="James R."/>
            <person name="Phelps K."/>
            <person name="Iadanoto S."/>
            <person name="Bubb K."/>
            <person name="Simms E."/>
            <person name="Levy R."/>
            <person name="Clendenning J."/>
            <person name="Kaul R."/>
            <person name="Kent W.J."/>
            <person name="Furey T.S."/>
            <person name="Baertsch R.A."/>
            <person name="Brent M.R."/>
            <person name="Keibler E."/>
            <person name="Flicek P."/>
            <person name="Bork P."/>
            <person name="Suyama M."/>
            <person name="Bailey J.A."/>
            <person name="Portnoy M.E."/>
            <person name="Torrents D."/>
            <person name="Chinwalla A.T."/>
            <person name="Gish W.R."/>
            <person name="Eddy S.R."/>
            <person name="McPherson J.D."/>
            <person name="Olson M.V."/>
            <person name="Eichler E.E."/>
            <person name="Green E.D."/>
            <person name="Waterston R.H."/>
            <person name="Wilson R.K."/>
        </authorList>
    </citation>
    <scope>NUCLEOTIDE SEQUENCE [LARGE SCALE GENOMIC DNA]</scope>
</reference>
<reference key="3">
    <citation type="submission" date="2005-07" db="EMBL/GenBank/DDBJ databases">
        <authorList>
            <person name="Mural R.J."/>
            <person name="Istrail S."/>
            <person name="Sutton G.G."/>
            <person name="Florea L."/>
            <person name="Halpern A.L."/>
            <person name="Mobarry C.M."/>
            <person name="Lippert R."/>
            <person name="Walenz B."/>
            <person name="Shatkay H."/>
            <person name="Dew I."/>
            <person name="Miller J.R."/>
            <person name="Flanigan M.J."/>
            <person name="Edwards N.J."/>
            <person name="Bolanos R."/>
            <person name="Fasulo D."/>
            <person name="Halldorsson B.V."/>
            <person name="Hannenhalli S."/>
            <person name="Turner R."/>
            <person name="Yooseph S."/>
            <person name="Lu F."/>
            <person name="Nusskern D.R."/>
            <person name="Shue B.C."/>
            <person name="Zheng X.H."/>
            <person name="Zhong F."/>
            <person name="Delcher A.L."/>
            <person name="Huson D.H."/>
            <person name="Kravitz S.A."/>
            <person name="Mouchard L."/>
            <person name="Reinert K."/>
            <person name="Remington K.A."/>
            <person name="Clark A.G."/>
            <person name="Waterman M.S."/>
            <person name="Eichler E.E."/>
            <person name="Adams M.D."/>
            <person name="Hunkapiller M.W."/>
            <person name="Myers E.W."/>
            <person name="Venter J.C."/>
        </authorList>
    </citation>
    <scope>NUCLEOTIDE SEQUENCE [LARGE SCALE GENOMIC DNA]</scope>
</reference>
<reference key="4">
    <citation type="journal article" date="2004" name="Genome Res.">
        <title>The status, quality, and expansion of the NIH full-length cDNA project: the Mammalian Gene Collection (MGC).</title>
        <authorList>
            <consortium name="The MGC Project Team"/>
        </authorList>
    </citation>
    <scope>NUCLEOTIDE SEQUENCE [LARGE SCALE MRNA]</scope>
    <source>
        <tissue>Testis</tissue>
    </source>
</reference>
<keyword id="KW-1185">Reference proteome</keyword>
<name>R216L_HUMAN</name>
<sequence>MEEGNNNEEVIHLNNFHCHRGQDFVIFFWKTQIIQREKTESL</sequence>
<dbReference type="EMBL" id="AK303831">
    <property type="protein sequence ID" value="BAH14062.1"/>
    <property type="status" value="ALT_SEQ"/>
    <property type="molecule type" value="mRNA"/>
</dbReference>
<dbReference type="EMBL" id="AC092032">
    <property type="status" value="NOT_ANNOTATED_CDS"/>
    <property type="molecule type" value="Genomic_DNA"/>
</dbReference>
<dbReference type="EMBL" id="CH471144">
    <property type="protein sequence ID" value="EAW87314.1"/>
    <property type="molecule type" value="Genomic_DNA"/>
</dbReference>
<dbReference type="EMBL" id="BC068459">
    <property type="status" value="NOT_ANNOTATED_CDS"/>
    <property type="molecule type" value="mRNA"/>
</dbReference>
<dbReference type="BioMuta" id="HGNC:33610"/>
<dbReference type="jPOST" id="Q6NUR6"/>
<dbReference type="MassIVE" id="Q6NUR6"/>
<dbReference type="PeptideAtlas" id="Q6NUR6"/>
<dbReference type="AGR" id="HGNC:33610"/>
<dbReference type="GeneCards" id="RNF216P1"/>
<dbReference type="HGNC" id="HGNC:33610">
    <property type="gene designation" value="RNF216P1"/>
</dbReference>
<dbReference type="neXtProt" id="NX_Q6NUR6"/>
<dbReference type="InParanoid" id="Q6NUR6"/>
<dbReference type="PAN-GO" id="Q6NUR6">
    <property type="GO annotations" value="0 GO annotations based on evolutionary models"/>
</dbReference>
<dbReference type="ChiTaRS" id="RNF216P1">
    <property type="organism name" value="human"/>
</dbReference>
<dbReference type="Pharos" id="Q6NUR6">
    <property type="development level" value="Tdark"/>
</dbReference>
<dbReference type="Proteomes" id="UP000005640">
    <property type="component" value="Unplaced"/>
</dbReference>
<organism>
    <name type="scientific">Homo sapiens</name>
    <name type="common">Human</name>
    <dbReference type="NCBI Taxonomy" id="9606"/>
    <lineage>
        <taxon>Eukaryota</taxon>
        <taxon>Metazoa</taxon>
        <taxon>Chordata</taxon>
        <taxon>Craniata</taxon>
        <taxon>Vertebrata</taxon>
        <taxon>Euteleostomi</taxon>
        <taxon>Mammalia</taxon>
        <taxon>Eutheria</taxon>
        <taxon>Euarchontoglires</taxon>
        <taxon>Primates</taxon>
        <taxon>Haplorrhini</taxon>
        <taxon>Catarrhini</taxon>
        <taxon>Hominidae</taxon>
        <taxon>Homo</taxon>
    </lineage>
</organism>
<comment type="caution">
    <text evidence="1">Could be the product of a pseudogene. Highly similar to the N-terminus of RNF216, but may encode a non-functional truncated protein.</text>
</comment>
<comment type="sequence caution" evidence="1">
    <conflict type="erroneous translation">
        <sequence resource="EMBL-CDS" id="BAH14062"/>
    </conflict>
    <text>Wrong choice of frame.</text>
</comment>
<accession>Q6NUR6</accession>
<accession>B7Z8S6</accession>
<protein>
    <recommendedName>
        <fullName>Putative protein RNF216-like</fullName>
    </recommendedName>
</protein>